<sequence length="545" mass="57651">MASKEINFSDSARNKLYEGIKQLSDAVKVTMGPKGRNVLIQKSYGAPTITKDGVSVAKEIELADPIANMGAQLVKEVASKTADAAGDGTTTATVLAYSIYKEGLRNITAGANPIEVKRGMDKASAAIIEELKKSSKKIGGKSDIAQVATISANSDENIGALIAEAMEKVGKDGVITVEEAKGINDELSVVEGMQFDRGYLSAYFVTNTDKMTAQLENAYVLLTDKKISNMKEILPLLEATMQSGKPLLIIAEDIEGEALTTLVVNKLRGVLNVSAVKAPGFGDRRKAMLQDIAILTGGQVISEELGKTLEAATLADLGSAARIVIDKDNTTIVDGKGKTKDVKDRIAQIKTEIENTTSDYDREKLQERLAKLSGGVAVIKVGAASEVEMKEKKDRVDDALSATKAAVDEGIVIGGGSALIRASQKVKLKLEGDEAIGYDIIKRAIKAPLAQIATNAGYDAGVVVNEVEKNSKDGFGFNATTGEYVDMFKEGIIDPLKVTRVALQNAVSVSSLLLTTEATINEIKEDKPAPAMPDMGGMGGMGGMM</sequence>
<organism>
    <name type="scientific">Helicobacter hepaticus (strain ATCC 51449 / 3B1)</name>
    <dbReference type="NCBI Taxonomy" id="235279"/>
    <lineage>
        <taxon>Bacteria</taxon>
        <taxon>Pseudomonadati</taxon>
        <taxon>Campylobacterota</taxon>
        <taxon>Epsilonproteobacteria</taxon>
        <taxon>Campylobacterales</taxon>
        <taxon>Helicobacteraceae</taxon>
        <taxon>Helicobacter</taxon>
    </lineage>
</organism>
<dbReference type="EC" id="5.6.1.7" evidence="1"/>
<dbReference type="EMBL" id="AE017125">
    <property type="protein sequence ID" value="AAP77798.1"/>
    <property type="molecule type" value="Genomic_DNA"/>
</dbReference>
<dbReference type="RefSeq" id="WP_011116041.1">
    <property type="nucleotide sequence ID" value="NC_004917.1"/>
</dbReference>
<dbReference type="SMR" id="Q7U317"/>
<dbReference type="STRING" id="235279.HH_1201"/>
<dbReference type="KEGG" id="hhe:HH_1201"/>
<dbReference type="eggNOG" id="COG0459">
    <property type="taxonomic scope" value="Bacteria"/>
</dbReference>
<dbReference type="HOGENOM" id="CLU_016503_3_0_7"/>
<dbReference type="OrthoDB" id="9766614at2"/>
<dbReference type="Proteomes" id="UP000002495">
    <property type="component" value="Chromosome"/>
</dbReference>
<dbReference type="GO" id="GO:0005737">
    <property type="term" value="C:cytoplasm"/>
    <property type="evidence" value="ECO:0007669"/>
    <property type="project" value="UniProtKB-SubCell"/>
</dbReference>
<dbReference type="GO" id="GO:0005524">
    <property type="term" value="F:ATP binding"/>
    <property type="evidence" value="ECO:0007669"/>
    <property type="project" value="UniProtKB-UniRule"/>
</dbReference>
<dbReference type="GO" id="GO:0140662">
    <property type="term" value="F:ATP-dependent protein folding chaperone"/>
    <property type="evidence" value="ECO:0007669"/>
    <property type="project" value="InterPro"/>
</dbReference>
<dbReference type="GO" id="GO:0016853">
    <property type="term" value="F:isomerase activity"/>
    <property type="evidence" value="ECO:0007669"/>
    <property type="project" value="UniProtKB-KW"/>
</dbReference>
<dbReference type="GO" id="GO:0051082">
    <property type="term" value="F:unfolded protein binding"/>
    <property type="evidence" value="ECO:0007669"/>
    <property type="project" value="UniProtKB-UniRule"/>
</dbReference>
<dbReference type="GO" id="GO:0042026">
    <property type="term" value="P:protein refolding"/>
    <property type="evidence" value="ECO:0007669"/>
    <property type="project" value="UniProtKB-UniRule"/>
</dbReference>
<dbReference type="CDD" id="cd03344">
    <property type="entry name" value="GroEL"/>
    <property type="match status" value="1"/>
</dbReference>
<dbReference type="FunFam" id="3.50.7.10:FF:000001">
    <property type="entry name" value="60 kDa chaperonin"/>
    <property type="match status" value="1"/>
</dbReference>
<dbReference type="Gene3D" id="3.50.7.10">
    <property type="entry name" value="GroEL"/>
    <property type="match status" value="1"/>
</dbReference>
<dbReference type="Gene3D" id="1.10.560.10">
    <property type="entry name" value="GroEL-like equatorial domain"/>
    <property type="match status" value="1"/>
</dbReference>
<dbReference type="Gene3D" id="3.30.260.10">
    <property type="entry name" value="TCP-1-like chaperonin intermediate domain"/>
    <property type="match status" value="1"/>
</dbReference>
<dbReference type="HAMAP" id="MF_00600">
    <property type="entry name" value="CH60"/>
    <property type="match status" value="1"/>
</dbReference>
<dbReference type="InterPro" id="IPR018370">
    <property type="entry name" value="Chaperonin_Cpn60_CS"/>
</dbReference>
<dbReference type="InterPro" id="IPR001844">
    <property type="entry name" value="Cpn60/GroEL"/>
</dbReference>
<dbReference type="InterPro" id="IPR002423">
    <property type="entry name" value="Cpn60/GroEL/TCP-1"/>
</dbReference>
<dbReference type="InterPro" id="IPR027409">
    <property type="entry name" value="GroEL-like_apical_dom_sf"/>
</dbReference>
<dbReference type="InterPro" id="IPR027413">
    <property type="entry name" value="GROEL-like_equatorial_sf"/>
</dbReference>
<dbReference type="InterPro" id="IPR027410">
    <property type="entry name" value="TCP-1-like_intermed_sf"/>
</dbReference>
<dbReference type="NCBIfam" id="TIGR02348">
    <property type="entry name" value="GroEL"/>
    <property type="match status" value="1"/>
</dbReference>
<dbReference type="NCBIfam" id="NF000592">
    <property type="entry name" value="PRK00013.1"/>
    <property type="match status" value="1"/>
</dbReference>
<dbReference type="NCBIfam" id="NF009487">
    <property type="entry name" value="PRK12849.1"/>
    <property type="match status" value="1"/>
</dbReference>
<dbReference type="NCBIfam" id="NF009488">
    <property type="entry name" value="PRK12850.1"/>
    <property type="match status" value="1"/>
</dbReference>
<dbReference type="NCBIfam" id="NF009489">
    <property type="entry name" value="PRK12851.1"/>
    <property type="match status" value="1"/>
</dbReference>
<dbReference type="PANTHER" id="PTHR45633">
    <property type="entry name" value="60 KDA HEAT SHOCK PROTEIN, MITOCHONDRIAL"/>
    <property type="match status" value="1"/>
</dbReference>
<dbReference type="Pfam" id="PF00118">
    <property type="entry name" value="Cpn60_TCP1"/>
    <property type="match status" value="1"/>
</dbReference>
<dbReference type="PRINTS" id="PR00298">
    <property type="entry name" value="CHAPERONIN60"/>
</dbReference>
<dbReference type="SUPFAM" id="SSF52029">
    <property type="entry name" value="GroEL apical domain-like"/>
    <property type="match status" value="1"/>
</dbReference>
<dbReference type="SUPFAM" id="SSF48592">
    <property type="entry name" value="GroEL equatorial domain-like"/>
    <property type="match status" value="1"/>
</dbReference>
<dbReference type="SUPFAM" id="SSF54849">
    <property type="entry name" value="GroEL-intermediate domain like"/>
    <property type="match status" value="1"/>
</dbReference>
<dbReference type="PROSITE" id="PS00296">
    <property type="entry name" value="CHAPERONINS_CPN60"/>
    <property type="match status" value="1"/>
</dbReference>
<accession>Q7U317</accession>
<proteinExistence type="inferred from homology"/>
<name>CH60_HELHP</name>
<evidence type="ECO:0000255" key="1">
    <source>
        <dbReference type="HAMAP-Rule" id="MF_00600"/>
    </source>
</evidence>
<gene>
    <name evidence="1" type="primary">groEL</name>
    <name evidence="1" type="synonym">groL</name>
    <name type="synonym">hspB</name>
    <name type="ordered locus">HH_1201</name>
</gene>
<feature type="chain" id="PRO_0000063388" description="Chaperonin GroEL">
    <location>
        <begin position="1"/>
        <end position="545"/>
    </location>
</feature>
<feature type="binding site" evidence="1">
    <location>
        <begin position="30"/>
        <end position="33"/>
    </location>
    <ligand>
        <name>ATP</name>
        <dbReference type="ChEBI" id="CHEBI:30616"/>
    </ligand>
</feature>
<feature type="binding site" evidence="1">
    <location>
        <position position="51"/>
    </location>
    <ligand>
        <name>ATP</name>
        <dbReference type="ChEBI" id="CHEBI:30616"/>
    </ligand>
</feature>
<feature type="binding site" evidence="1">
    <location>
        <begin position="87"/>
        <end position="91"/>
    </location>
    <ligand>
        <name>ATP</name>
        <dbReference type="ChEBI" id="CHEBI:30616"/>
    </ligand>
</feature>
<feature type="binding site" evidence="1">
    <location>
        <position position="415"/>
    </location>
    <ligand>
        <name>ATP</name>
        <dbReference type="ChEBI" id="CHEBI:30616"/>
    </ligand>
</feature>
<feature type="binding site" evidence="1">
    <location>
        <position position="494"/>
    </location>
    <ligand>
        <name>ATP</name>
        <dbReference type="ChEBI" id="CHEBI:30616"/>
    </ligand>
</feature>
<keyword id="KW-0067">ATP-binding</keyword>
<keyword id="KW-0143">Chaperone</keyword>
<keyword id="KW-0963">Cytoplasm</keyword>
<keyword id="KW-0413">Isomerase</keyword>
<keyword id="KW-0547">Nucleotide-binding</keyword>
<keyword id="KW-1185">Reference proteome</keyword>
<comment type="function">
    <text evidence="1">Together with its co-chaperonin GroES, plays an essential role in assisting protein folding. The GroEL-GroES system forms a nano-cage that allows encapsulation of the non-native substrate proteins and provides a physical environment optimized to promote and accelerate protein folding.</text>
</comment>
<comment type="catalytic activity">
    <reaction evidence="1">
        <text>ATP + H2O + a folded polypeptide = ADP + phosphate + an unfolded polypeptide.</text>
        <dbReference type="EC" id="5.6.1.7"/>
    </reaction>
</comment>
<comment type="subunit">
    <text evidence="1">Forms a cylinder of 14 subunits composed of two heptameric rings stacked back-to-back. Interacts with the co-chaperonin GroES.</text>
</comment>
<comment type="subcellular location">
    <subcellularLocation>
        <location evidence="1">Cytoplasm</location>
    </subcellularLocation>
</comment>
<comment type="similarity">
    <text evidence="1">Belongs to the chaperonin (HSP60) family.</text>
</comment>
<protein>
    <recommendedName>
        <fullName evidence="1">Chaperonin GroEL</fullName>
        <ecNumber evidence="1">5.6.1.7</ecNumber>
    </recommendedName>
    <alternativeName>
        <fullName evidence="1">60 kDa chaperonin</fullName>
    </alternativeName>
    <alternativeName>
        <fullName evidence="1">Chaperonin-60</fullName>
        <shortName evidence="1">Cpn60</shortName>
    </alternativeName>
</protein>
<reference key="1">
    <citation type="journal article" date="2003" name="Proc. Natl. Acad. Sci. U.S.A.">
        <title>The complete genome sequence of the carcinogenic bacterium Helicobacter hepaticus.</title>
        <authorList>
            <person name="Suerbaum S."/>
            <person name="Josenhans C."/>
            <person name="Sterzenbach T."/>
            <person name="Drescher B."/>
            <person name="Brandt P."/>
            <person name="Bell M."/>
            <person name="Droege M."/>
            <person name="Fartmann B."/>
            <person name="Fischer H.-P."/>
            <person name="Ge Z."/>
            <person name="Hoerster A."/>
            <person name="Holland R."/>
            <person name="Klein K."/>
            <person name="Koenig J."/>
            <person name="Macko L."/>
            <person name="Mendz G.L."/>
            <person name="Nyakatura G."/>
            <person name="Schauer D.B."/>
            <person name="Shen Z."/>
            <person name="Weber J."/>
            <person name="Frosch M."/>
            <person name="Fox J.G."/>
        </authorList>
    </citation>
    <scope>NUCLEOTIDE SEQUENCE [LARGE SCALE GENOMIC DNA]</scope>
    <source>
        <strain>ATCC 51449 / 3B1</strain>
    </source>
</reference>